<proteinExistence type="inferred from homology"/>
<feature type="chain" id="PRO_0000381958" description="Carboxy-S-adenosyl-L-methionine synthase">
    <location>
        <begin position="1"/>
        <end position="244"/>
    </location>
</feature>
<feature type="binding site" evidence="1">
    <location>
        <position position="40"/>
    </location>
    <ligand>
        <name>S-adenosyl-L-methionine</name>
        <dbReference type="ChEBI" id="CHEBI:59789"/>
    </ligand>
</feature>
<feature type="binding site" evidence="1">
    <location>
        <begin position="65"/>
        <end position="67"/>
    </location>
    <ligand>
        <name>S-adenosyl-L-methionine</name>
        <dbReference type="ChEBI" id="CHEBI:59789"/>
    </ligand>
</feature>
<feature type="binding site" evidence="1">
    <location>
        <begin position="90"/>
        <end position="91"/>
    </location>
    <ligand>
        <name>S-adenosyl-L-methionine</name>
        <dbReference type="ChEBI" id="CHEBI:59789"/>
    </ligand>
</feature>
<feature type="binding site" evidence="1">
    <location>
        <begin position="119"/>
        <end position="120"/>
    </location>
    <ligand>
        <name>S-adenosyl-L-methionine</name>
        <dbReference type="ChEBI" id="CHEBI:59789"/>
    </ligand>
</feature>
<feature type="binding site" evidence="1">
    <location>
        <position position="134"/>
    </location>
    <ligand>
        <name>S-adenosyl-L-methionine</name>
        <dbReference type="ChEBI" id="CHEBI:59789"/>
    </ligand>
</feature>
<feature type="binding site" evidence="1">
    <location>
        <position position="201"/>
    </location>
    <ligand>
        <name>S-adenosyl-L-methionine</name>
        <dbReference type="ChEBI" id="CHEBI:59789"/>
    </ligand>
</feature>
<reference key="1">
    <citation type="submission" date="2008-05" db="EMBL/GenBank/DDBJ databases">
        <title>Complete sequence of chromosome of Geobacter lovleyi SZ.</title>
        <authorList>
            <consortium name="US DOE Joint Genome Institute"/>
            <person name="Lucas S."/>
            <person name="Copeland A."/>
            <person name="Lapidus A."/>
            <person name="Glavina del Rio T."/>
            <person name="Dalin E."/>
            <person name="Tice H."/>
            <person name="Bruce D."/>
            <person name="Goodwin L."/>
            <person name="Pitluck S."/>
            <person name="Chertkov O."/>
            <person name="Meincke L."/>
            <person name="Brettin T."/>
            <person name="Detter J.C."/>
            <person name="Han C."/>
            <person name="Tapia R."/>
            <person name="Kuske C.R."/>
            <person name="Schmutz J."/>
            <person name="Larimer F."/>
            <person name="Land M."/>
            <person name="Hauser L."/>
            <person name="Kyrpides N."/>
            <person name="Mikhailova N."/>
            <person name="Sung Y."/>
            <person name="Fletcher K.E."/>
            <person name="Ritalahti K.M."/>
            <person name="Loeffler F.E."/>
            <person name="Richardson P."/>
        </authorList>
    </citation>
    <scope>NUCLEOTIDE SEQUENCE [LARGE SCALE GENOMIC DNA]</scope>
    <source>
        <strain>ATCC BAA-1151 / DSM 17278 / SZ</strain>
    </source>
</reference>
<protein>
    <recommendedName>
        <fullName evidence="1">Carboxy-S-adenosyl-L-methionine synthase</fullName>
        <shortName evidence="1">Cx-SAM synthase</shortName>
        <ecNumber evidence="1">2.1.3.-</ecNumber>
    </recommendedName>
</protein>
<accession>B3E6X7</accession>
<evidence type="ECO:0000255" key="1">
    <source>
        <dbReference type="HAMAP-Rule" id="MF_01589"/>
    </source>
</evidence>
<organism>
    <name type="scientific">Trichlorobacter lovleyi (strain ATCC BAA-1151 / DSM 17278 / SZ)</name>
    <name type="common">Geobacter lovleyi</name>
    <dbReference type="NCBI Taxonomy" id="398767"/>
    <lineage>
        <taxon>Bacteria</taxon>
        <taxon>Pseudomonadati</taxon>
        <taxon>Thermodesulfobacteriota</taxon>
        <taxon>Desulfuromonadia</taxon>
        <taxon>Geobacterales</taxon>
        <taxon>Geobacteraceae</taxon>
        <taxon>Trichlorobacter</taxon>
    </lineage>
</organism>
<name>CMOA_TRIL1</name>
<dbReference type="EC" id="2.1.3.-" evidence="1"/>
<dbReference type="EMBL" id="CP001089">
    <property type="protein sequence ID" value="ACD96382.1"/>
    <property type="molecule type" value="Genomic_DNA"/>
</dbReference>
<dbReference type="RefSeq" id="WP_012470712.1">
    <property type="nucleotide sequence ID" value="NC_010814.1"/>
</dbReference>
<dbReference type="SMR" id="B3E6X7"/>
<dbReference type="STRING" id="398767.Glov_2669"/>
<dbReference type="KEGG" id="glo:Glov_2669"/>
<dbReference type="eggNOG" id="COG4106">
    <property type="taxonomic scope" value="Bacteria"/>
</dbReference>
<dbReference type="HOGENOM" id="CLU_078475_0_0_7"/>
<dbReference type="OrthoDB" id="5386938at2"/>
<dbReference type="Proteomes" id="UP000002420">
    <property type="component" value="Chromosome"/>
</dbReference>
<dbReference type="GO" id="GO:0016743">
    <property type="term" value="F:carboxyl- or carbamoyltransferase activity"/>
    <property type="evidence" value="ECO:0007669"/>
    <property type="project" value="UniProtKB-UniRule"/>
</dbReference>
<dbReference type="GO" id="GO:1904047">
    <property type="term" value="F:S-adenosyl-L-methionine binding"/>
    <property type="evidence" value="ECO:0007669"/>
    <property type="project" value="UniProtKB-UniRule"/>
</dbReference>
<dbReference type="GO" id="GO:0002098">
    <property type="term" value="P:tRNA wobble uridine modification"/>
    <property type="evidence" value="ECO:0007669"/>
    <property type="project" value="InterPro"/>
</dbReference>
<dbReference type="CDD" id="cd02440">
    <property type="entry name" value="AdoMet_MTases"/>
    <property type="match status" value="1"/>
</dbReference>
<dbReference type="Gene3D" id="3.40.50.150">
    <property type="entry name" value="Vaccinia Virus protein VP39"/>
    <property type="match status" value="1"/>
</dbReference>
<dbReference type="HAMAP" id="MF_01589">
    <property type="entry name" value="Cx_SAM_synthase"/>
    <property type="match status" value="1"/>
</dbReference>
<dbReference type="InterPro" id="IPR005271">
    <property type="entry name" value="CmoA"/>
</dbReference>
<dbReference type="InterPro" id="IPR041698">
    <property type="entry name" value="Methyltransf_25"/>
</dbReference>
<dbReference type="InterPro" id="IPR029063">
    <property type="entry name" value="SAM-dependent_MTases_sf"/>
</dbReference>
<dbReference type="NCBIfam" id="TIGR00740">
    <property type="entry name" value="carboxy-S-adenosyl-L-methionine synthase CmoA"/>
    <property type="match status" value="1"/>
</dbReference>
<dbReference type="NCBIfam" id="NF011995">
    <property type="entry name" value="PRK15451.1"/>
    <property type="match status" value="1"/>
</dbReference>
<dbReference type="PANTHER" id="PTHR43861:SF2">
    <property type="entry name" value="CARBOXY-S-ADENOSYL-L-METHIONINE SYNTHASE"/>
    <property type="match status" value="1"/>
</dbReference>
<dbReference type="PANTHER" id="PTHR43861">
    <property type="entry name" value="TRANS-ACONITATE 2-METHYLTRANSFERASE-RELATED"/>
    <property type="match status" value="1"/>
</dbReference>
<dbReference type="Pfam" id="PF13649">
    <property type="entry name" value="Methyltransf_25"/>
    <property type="match status" value="1"/>
</dbReference>
<dbReference type="PIRSF" id="PIRSF006325">
    <property type="entry name" value="MeTrfase_bac"/>
    <property type="match status" value="1"/>
</dbReference>
<dbReference type="SUPFAM" id="SSF53335">
    <property type="entry name" value="S-adenosyl-L-methionine-dependent methyltransferases"/>
    <property type="match status" value="1"/>
</dbReference>
<gene>
    <name evidence="1" type="primary">cmoA</name>
    <name type="ordered locus">Glov_2669</name>
</gene>
<comment type="function">
    <text evidence="1">Catalyzes the conversion of S-adenosyl-L-methionine (SAM) to carboxy-S-adenosyl-L-methionine (Cx-SAM).</text>
</comment>
<comment type="catalytic activity">
    <reaction evidence="1">
        <text>prephenate + S-adenosyl-L-methionine = carboxy-S-adenosyl-L-methionine + 3-phenylpyruvate + H2O</text>
        <dbReference type="Rhea" id="RHEA:51692"/>
        <dbReference type="ChEBI" id="CHEBI:15377"/>
        <dbReference type="ChEBI" id="CHEBI:18005"/>
        <dbReference type="ChEBI" id="CHEBI:29934"/>
        <dbReference type="ChEBI" id="CHEBI:59789"/>
        <dbReference type="ChEBI" id="CHEBI:134278"/>
    </reaction>
</comment>
<comment type="subunit">
    <text evidence="1">Homodimer.</text>
</comment>
<comment type="similarity">
    <text evidence="1">Belongs to the class I-like SAM-binding methyltransferase superfamily. Cx-SAM synthase family.</text>
</comment>
<sequence>MTKKTDALYAAPLHDIIDFQFDERVVAVFPDMIQRSVPGYGMIIANIGVIAARYAQPGSHCYDLGCSLGAATLAMRQRITAPDCDIIAVDNSPAMIERARELLSLDTGLYIPVTLLCSDLQEVTIENASVVVLNFTLQFIPPPQRLALMQRIYAGLNPGGILILSEKIAFSKPEQQQLHIELHHDFKRANGYSDLEISQKRSALENVMIPETVAVHQKRLQTAGFSCAELWFQCFNFASLVAIK</sequence>
<keyword id="KW-1185">Reference proteome</keyword>
<keyword id="KW-0949">S-adenosyl-L-methionine</keyword>
<keyword id="KW-0808">Transferase</keyword>